<keyword id="KW-0067">ATP-binding</keyword>
<keyword id="KW-0131">Cell cycle</keyword>
<keyword id="KW-0132">Cell division</keyword>
<keyword id="KW-0133">Cell shape</keyword>
<keyword id="KW-0961">Cell wall biogenesis/degradation</keyword>
<keyword id="KW-0963">Cytoplasm</keyword>
<keyword id="KW-0436">Ligase</keyword>
<keyword id="KW-0547">Nucleotide-binding</keyword>
<keyword id="KW-0573">Peptidoglycan synthesis</keyword>
<proteinExistence type="inferred from homology"/>
<sequence>MYKIDFSKPIHIHFIGIGGISMSGLAEILHEEGFTISGSDSKESDLTKTLAAKGIKVIYGQSADNITTGIDLVVYTAAIHESNPEFAAAKAAGIPMLTRAELLGQIMDNYDYSIAVAGTHGKTTTTSMISEILLAAQTDPTISVGGILSSIHGNLRVGDSEYFISEACEYTNSFLNFRPRYSIILNIEAEHLDFFKDINDIRHSFREYASNTLAGGATIINGEIDRYEEIVAGLPQKIITYGFDSKYDFYPENITYDDKACASFTAMRQGSPLFDVKLSVPGAHNVSNALAAIALSTTLGLDEESILTGLDKFGGADRRFQYKGKVNGVTIIDDYAHHPTEIRATLTAAQKYPHDRLVLCFQPHTYSRTKAFLNDFADVLSMADVVVLADIYAAREQNTYGISSKDILDLLLEKGVNAHYFPSFEEIEKFLSENCVNGDLLITMGAGNVVEIGEDLLKK</sequence>
<organism>
    <name type="scientific">Agathobacter rectalis (strain ATCC 33656 / DSM 3377 / JCM 17463 / KCTC 5835 / VPI 0990)</name>
    <name type="common">Eubacterium rectale</name>
    <dbReference type="NCBI Taxonomy" id="515619"/>
    <lineage>
        <taxon>Bacteria</taxon>
        <taxon>Bacillati</taxon>
        <taxon>Bacillota</taxon>
        <taxon>Clostridia</taxon>
        <taxon>Lachnospirales</taxon>
        <taxon>Lachnospiraceae</taxon>
        <taxon>Agathobacter</taxon>
    </lineage>
</organism>
<gene>
    <name evidence="1" type="primary">murC</name>
    <name type="ordered locus">EUBREC_0450</name>
</gene>
<accession>C4ZBV1</accession>
<comment type="function">
    <text evidence="1">Cell wall formation.</text>
</comment>
<comment type="catalytic activity">
    <reaction evidence="1">
        <text>UDP-N-acetyl-alpha-D-muramate + L-alanine + ATP = UDP-N-acetyl-alpha-D-muramoyl-L-alanine + ADP + phosphate + H(+)</text>
        <dbReference type="Rhea" id="RHEA:23372"/>
        <dbReference type="ChEBI" id="CHEBI:15378"/>
        <dbReference type="ChEBI" id="CHEBI:30616"/>
        <dbReference type="ChEBI" id="CHEBI:43474"/>
        <dbReference type="ChEBI" id="CHEBI:57972"/>
        <dbReference type="ChEBI" id="CHEBI:70757"/>
        <dbReference type="ChEBI" id="CHEBI:83898"/>
        <dbReference type="ChEBI" id="CHEBI:456216"/>
        <dbReference type="EC" id="6.3.2.8"/>
    </reaction>
</comment>
<comment type="pathway">
    <text evidence="1">Cell wall biogenesis; peptidoglycan biosynthesis.</text>
</comment>
<comment type="subcellular location">
    <subcellularLocation>
        <location evidence="1">Cytoplasm</location>
    </subcellularLocation>
</comment>
<comment type="similarity">
    <text evidence="1">Belongs to the MurCDEF family.</text>
</comment>
<reference key="1">
    <citation type="journal article" date="2009" name="Proc. Natl. Acad. Sci. U.S.A.">
        <title>Characterizing a model human gut microbiota composed of members of its two dominant bacterial phyla.</title>
        <authorList>
            <person name="Mahowald M.A."/>
            <person name="Rey F.E."/>
            <person name="Seedorf H."/>
            <person name="Turnbaugh P.J."/>
            <person name="Fulton R.S."/>
            <person name="Wollam A."/>
            <person name="Shah N."/>
            <person name="Wang C."/>
            <person name="Magrini V."/>
            <person name="Wilson R.K."/>
            <person name="Cantarel B.L."/>
            <person name="Coutinho P.M."/>
            <person name="Henrissat B."/>
            <person name="Crock L.W."/>
            <person name="Russell A."/>
            <person name="Verberkmoes N.C."/>
            <person name="Hettich R.L."/>
            <person name="Gordon J.I."/>
        </authorList>
    </citation>
    <scope>NUCLEOTIDE SEQUENCE [LARGE SCALE GENOMIC DNA]</scope>
    <source>
        <strain>ATCC 33656 / DSM 3377 / JCM 17463 / KCTC 5835 / LMG 30912 / VPI 0990</strain>
    </source>
</reference>
<feature type="chain" id="PRO_1000202179" description="UDP-N-acetylmuramate--L-alanine ligase">
    <location>
        <begin position="1"/>
        <end position="459"/>
    </location>
</feature>
<feature type="binding site" evidence="1">
    <location>
        <begin position="118"/>
        <end position="124"/>
    </location>
    <ligand>
        <name>ATP</name>
        <dbReference type="ChEBI" id="CHEBI:30616"/>
    </ligand>
</feature>
<evidence type="ECO:0000255" key="1">
    <source>
        <dbReference type="HAMAP-Rule" id="MF_00046"/>
    </source>
</evidence>
<name>MURC_AGARV</name>
<dbReference type="EC" id="6.3.2.8" evidence="1"/>
<dbReference type="EMBL" id="CP001107">
    <property type="protein sequence ID" value="ACR74241.1"/>
    <property type="molecule type" value="Genomic_DNA"/>
</dbReference>
<dbReference type="RefSeq" id="WP_012741358.1">
    <property type="nucleotide sequence ID" value="NC_012781.1"/>
</dbReference>
<dbReference type="SMR" id="C4ZBV1"/>
<dbReference type="STRING" id="515619.EUBREC_0450"/>
<dbReference type="PaxDb" id="515619-EUBREC_0450"/>
<dbReference type="GeneID" id="86987361"/>
<dbReference type="KEGG" id="ere:EUBREC_0450"/>
<dbReference type="HOGENOM" id="CLU_028104_1_0_9"/>
<dbReference type="UniPathway" id="UPA00219"/>
<dbReference type="Proteomes" id="UP000001477">
    <property type="component" value="Chromosome"/>
</dbReference>
<dbReference type="GO" id="GO:0005737">
    <property type="term" value="C:cytoplasm"/>
    <property type="evidence" value="ECO:0007669"/>
    <property type="project" value="UniProtKB-SubCell"/>
</dbReference>
<dbReference type="GO" id="GO:0005524">
    <property type="term" value="F:ATP binding"/>
    <property type="evidence" value="ECO:0007669"/>
    <property type="project" value="UniProtKB-UniRule"/>
</dbReference>
<dbReference type="GO" id="GO:0008763">
    <property type="term" value="F:UDP-N-acetylmuramate-L-alanine ligase activity"/>
    <property type="evidence" value="ECO:0007669"/>
    <property type="project" value="UniProtKB-UniRule"/>
</dbReference>
<dbReference type="GO" id="GO:0051301">
    <property type="term" value="P:cell division"/>
    <property type="evidence" value="ECO:0007669"/>
    <property type="project" value="UniProtKB-KW"/>
</dbReference>
<dbReference type="GO" id="GO:0071555">
    <property type="term" value="P:cell wall organization"/>
    <property type="evidence" value="ECO:0007669"/>
    <property type="project" value="UniProtKB-KW"/>
</dbReference>
<dbReference type="GO" id="GO:0009252">
    <property type="term" value="P:peptidoglycan biosynthetic process"/>
    <property type="evidence" value="ECO:0007669"/>
    <property type="project" value="UniProtKB-UniRule"/>
</dbReference>
<dbReference type="GO" id="GO:0008360">
    <property type="term" value="P:regulation of cell shape"/>
    <property type="evidence" value="ECO:0007669"/>
    <property type="project" value="UniProtKB-KW"/>
</dbReference>
<dbReference type="Gene3D" id="3.90.190.20">
    <property type="entry name" value="Mur ligase, C-terminal domain"/>
    <property type="match status" value="1"/>
</dbReference>
<dbReference type="Gene3D" id="3.40.1190.10">
    <property type="entry name" value="Mur-like, catalytic domain"/>
    <property type="match status" value="1"/>
</dbReference>
<dbReference type="Gene3D" id="3.40.50.720">
    <property type="entry name" value="NAD(P)-binding Rossmann-like Domain"/>
    <property type="match status" value="1"/>
</dbReference>
<dbReference type="HAMAP" id="MF_00046">
    <property type="entry name" value="MurC"/>
    <property type="match status" value="1"/>
</dbReference>
<dbReference type="InterPro" id="IPR036565">
    <property type="entry name" value="Mur-like_cat_sf"/>
</dbReference>
<dbReference type="InterPro" id="IPR004101">
    <property type="entry name" value="Mur_ligase_C"/>
</dbReference>
<dbReference type="InterPro" id="IPR036615">
    <property type="entry name" value="Mur_ligase_C_dom_sf"/>
</dbReference>
<dbReference type="InterPro" id="IPR013221">
    <property type="entry name" value="Mur_ligase_cen"/>
</dbReference>
<dbReference type="InterPro" id="IPR000713">
    <property type="entry name" value="Mur_ligase_N"/>
</dbReference>
<dbReference type="InterPro" id="IPR050061">
    <property type="entry name" value="MurCDEF_pg_biosynth"/>
</dbReference>
<dbReference type="InterPro" id="IPR005758">
    <property type="entry name" value="UDP-N-AcMur_Ala_ligase_MurC"/>
</dbReference>
<dbReference type="NCBIfam" id="TIGR01082">
    <property type="entry name" value="murC"/>
    <property type="match status" value="1"/>
</dbReference>
<dbReference type="PANTHER" id="PTHR43445:SF3">
    <property type="entry name" value="UDP-N-ACETYLMURAMATE--L-ALANINE LIGASE"/>
    <property type="match status" value="1"/>
</dbReference>
<dbReference type="PANTHER" id="PTHR43445">
    <property type="entry name" value="UDP-N-ACETYLMURAMATE--L-ALANINE LIGASE-RELATED"/>
    <property type="match status" value="1"/>
</dbReference>
<dbReference type="Pfam" id="PF01225">
    <property type="entry name" value="Mur_ligase"/>
    <property type="match status" value="1"/>
</dbReference>
<dbReference type="Pfam" id="PF02875">
    <property type="entry name" value="Mur_ligase_C"/>
    <property type="match status" value="1"/>
</dbReference>
<dbReference type="Pfam" id="PF08245">
    <property type="entry name" value="Mur_ligase_M"/>
    <property type="match status" value="1"/>
</dbReference>
<dbReference type="SUPFAM" id="SSF51984">
    <property type="entry name" value="MurCD N-terminal domain"/>
    <property type="match status" value="1"/>
</dbReference>
<dbReference type="SUPFAM" id="SSF53623">
    <property type="entry name" value="MurD-like peptide ligases, catalytic domain"/>
    <property type="match status" value="1"/>
</dbReference>
<dbReference type="SUPFAM" id="SSF53244">
    <property type="entry name" value="MurD-like peptide ligases, peptide-binding domain"/>
    <property type="match status" value="1"/>
</dbReference>
<protein>
    <recommendedName>
        <fullName evidence="1">UDP-N-acetylmuramate--L-alanine ligase</fullName>
        <ecNumber evidence="1">6.3.2.8</ecNumber>
    </recommendedName>
    <alternativeName>
        <fullName evidence="1">UDP-N-acetylmuramoyl-L-alanine synthetase</fullName>
    </alternativeName>
</protein>